<gene>
    <name type="primary">tcaA</name>
    <name type="ordered locus">SAA6008_02393</name>
</gene>
<evidence type="ECO:0000250" key="1"/>
<evidence type="ECO:0000255" key="2"/>
<evidence type="ECO:0000305" key="3"/>
<sequence length="460" mass="52114">MKSCPKCGQQAQDDVQICTQCGHKFDSRQALYRKSTDEDIQTNNIKMRKMVPWAIGFFILILIIILFFLLRNFNSPEAQTKILVNAIENNDKQKVATLLSTKDNKVDSEEAKVYINYIKDEVGLKQFVSDLKNTVHKLNKSKTSVASYIQTRSGQNILRVSKNGTRYIFFDNMSFTAPTKQPIVKPKEKTKYEFKSGGKKKMVIAEANKVTPIGNFIPGTYRIPAMKSTENGDFAGHLKFDFRQSNSETVDVTEDFEEANISVTLKGDTKLNDSSKKVTINDHEMAFSSSKTYGPYPQNKDITISASGKAKDKTFTTQTKTIKASDLKYNTEITLNFDSEDIEDYVEKKEKEENSLKNKLIEFFAGYSLANNAAFNQSDFDFVSSYIKKGSSFYDDVKKRVSKGSLMMISSPQIIDAEKHGDKITATVRLINENGKQVDKEYELEQGSQDRLQLIKTSEK</sequence>
<keyword id="KW-0046">Antibiotic resistance</keyword>
<keyword id="KW-1003">Cell membrane</keyword>
<keyword id="KW-0472">Membrane</keyword>
<keyword id="KW-0479">Metal-binding</keyword>
<keyword id="KW-0812">Transmembrane</keyword>
<keyword id="KW-1133">Transmembrane helix</keyword>
<keyword id="KW-0862">Zinc</keyword>
<keyword id="KW-0863">Zinc-finger</keyword>
<proteinExistence type="inferred from homology"/>
<protein>
    <recommendedName>
        <fullName>Membrane-associated protein TcaA</fullName>
    </recommendedName>
</protein>
<organism>
    <name type="scientific">Staphylococcus aureus (strain JKD6008)</name>
    <dbReference type="NCBI Taxonomy" id="546342"/>
    <lineage>
        <taxon>Bacteria</taxon>
        <taxon>Bacillati</taxon>
        <taxon>Bacillota</taxon>
        <taxon>Bacilli</taxon>
        <taxon>Bacillales</taxon>
        <taxon>Staphylococcaceae</taxon>
        <taxon>Staphylococcus</taxon>
    </lineage>
</organism>
<accession>D9RQS7</accession>
<dbReference type="EMBL" id="CP002120">
    <property type="protein sequence ID" value="ADL66404.1"/>
    <property type="molecule type" value="Genomic_DNA"/>
</dbReference>
<dbReference type="RefSeq" id="WP_000833797.1">
    <property type="nucleotide sequence ID" value="NC_017341.1"/>
</dbReference>
<dbReference type="KEGG" id="suk:SAA6008_02393"/>
<dbReference type="PATRIC" id="fig|546342.4.peg.2517"/>
<dbReference type="HOGENOM" id="CLU_047245_0_0_9"/>
<dbReference type="GO" id="GO:0005886">
    <property type="term" value="C:plasma membrane"/>
    <property type="evidence" value="ECO:0007669"/>
    <property type="project" value="UniProtKB-SubCell"/>
</dbReference>
<dbReference type="GO" id="GO:0008270">
    <property type="term" value="F:zinc ion binding"/>
    <property type="evidence" value="ECO:0007669"/>
    <property type="project" value="UniProtKB-KW"/>
</dbReference>
<dbReference type="GO" id="GO:0046677">
    <property type="term" value="P:response to antibiotic"/>
    <property type="evidence" value="ECO:0007669"/>
    <property type="project" value="UniProtKB-KW"/>
</dbReference>
<dbReference type="InterPro" id="IPR023599">
    <property type="entry name" value="Mem_prot_TcaA"/>
</dbReference>
<dbReference type="InterPro" id="IPR054529">
    <property type="entry name" value="TcaA_2nd"/>
</dbReference>
<dbReference type="InterPro" id="IPR054530">
    <property type="entry name" value="TcaA_4th"/>
</dbReference>
<dbReference type="PANTHER" id="PTHR40038">
    <property type="entry name" value="MEMBRANE-ASSOCIATED PROTEIN TCAA"/>
    <property type="match status" value="1"/>
</dbReference>
<dbReference type="PANTHER" id="PTHR40038:SF1">
    <property type="entry name" value="MEMBRANE-ASSOCIATED PROTEIN TCAA"/>
    <property type="match status" value="1"/>
</dbReference>
<dbReference type="Pfam" id="PF22813">
    <property type="entry name" value="TcaA_2nd"/>
    <property type="match status" value="1"/>
</dbReference>
<dbReference type="Pfam" id="PF22820">
    <property type="entry name" value="TcaA_3rd_4th"/>
    <property type="match status" value="1"/>
</dbReference>
<dbReference type="Pfam" id="PF22819">
    <property type="entry name" value="TcaA_5th"/>
    <property type="match status" value="1"/>
</dbReference>
<dbReference type="PIRSF" id="PIRSF032522">
    <property type="entry name" value="TcaA"/>
    <property type="match status" value="1"/>
</dbReference>
<comment type="function">
    <text evidence="1">Plays a major role in decreasing resistance to glycopeptide antibiotics.</text>
</comment>
<comment type="subcellular location">
    <subcellularLocation>
        <location evidence="3">Cell membrane</location>
        <topology evidence="3">Single-pass membrane protein</topology>
    </subcellularLocation>
</comment>
<comment type="similarity">
    <text evidence="3">Belongs to the TcaA family.</text>
</comment>
<feature type="chain" id="PRO_0000412066" description="Membrane-associated protein TcaA">
    <location>
        <begin position="1"/>
        <end position="460"/>
    </location>
</feature>
<feature type="topological domain" description="Cytoplasmic" evidence="2">
    <location>
        <begin position="1"/>
        <end position="49"/>
    </location>
</feature>
<feature type="transmembrane region" description="Helical" evidence="2">
    <location>
        <begin position="50"/>
        <end position="70"/>
    </location>
</feature>
<feature type="topological domain" description="Extracellular" evidence="2">
    <location>
        <begin position="71"/>
        <end position="460"/>
    </location>
</feature>
<feature type="zinc finger region" description="C4-type" evidence="2">
    <location>
        <begin position="4"/>
        <end position="21"/>
    </location>
</feature>
<name>TCAA_STAAK</name>
<reference key="1">
    <citation type="journal article" date="2010" name="J. Bacteriol.">
        <title>Complete genome sequence of Staphylococcus aureus strain JKD6008, an ST239 clone of methicillin-resistant Staphylococcus aureus with intermediate-level vancomycin resistance.</title>
        <authorList>
            <person name="Howden B.P."/>
            <person name="Seemann T."/>
            <person name="Harrison P.F."/>
            <person name="McEvoy C.R."/>
            <person name="Stanton J.A."/>
            <person name="Rand C.J."/>
            <person name="Mason C.W."/>
            <person name="Jensen S.O."/>
            <person name="Firth N."/>
            <person name="Davies J.K."/>
            <person name="Johnson P.D."/>
            <person name="Stinear T.P."/>
        </authorList>
    </citation>
    <scope>NUCLEOTIDE SEQUENCE [LARGE SCALE GENOMIC DNA]</scope>
    <source>
        <strain>JKD6008</strain>
    </source>
</reference>